<sequence>MKIYKVGGAVRDRLLGIKVTDIDRVVVGATTEEMLAKGFKPVGADFPVFLDPKNGDEYALARTERKSGRGYGGFVFHASPEVTLEEDLIRRDLTINAMAEDDDGNLTDPYHGLRDLEARILRHVSPAFAEDPLRVLRVARFAARYAHLGFTVAPETLELMRQLSESGELEALTPERSWKEISRALMEDQPQVFIQVLRDCAALKTLMPEVDALFGVPQPEAHHPEIDTGVHTLSVLEQAALHKQPLTVRWACLLHDLGKGTTPVDKLPQHIAHEHRGLKLIKAVNERFKVPRDCQELALLVGQYHTHGHRALELKASTLLELLQSFDVYRRPQRFEEFAIACEMDARGRKGLEQRIYPQADYLRGAAKAAREVAVAPLLEKGYKGPELGEALKRERLKALKAYKEQPIL</sequence>
<name>CCA_PSEFS</name>
<gene>
    <name evidence="1" type="primary">cca</name>
    <name type="ordered locus">PFLU_5585</name>
</gene>
<accession>C3K334</accession>
<proteinExistence type="inferred from homology"/>
<evidence type="ECO:0000255" key="1">
    <source>
        <dbReference type="HAMAP-Rule" id="MF_01261"/>
    </source>
</evidence>
<organism>
    <name type="scientific">Pseudomonas fluorescens (strain SBW25)</name>
    <dbReference type="NCBI Taxonomy" id="216595"/>
    <lineage>
        <taxon>Bacteria</taxon>
        <taxon>Pseudomonadati</taxon>
        <taxon>Pseudomonadota</taxon>
        <taxon>Gammaproteobacteria</taxon>
        <taxon>Pseudomonadales</taxon>
        <taxon>Pseudomonadaceae</taxon>
        <taxon>Pseudomonas</taxon>
    </lineage>
</organism>
<feature type="chain" id="PRO_1000214133" description="Multifunctional CCA protein">
    <location>
        <begin position="1"/>
        <end position="409"/>
    </location>
</feature>
<feature type="domain" description="HD" evidence="1">
    <location>
        <begin position="228"/>
        <end position="329"/>
    </location>
</feature>
<feature type="binding site" evidence="1">
    <location>
        <position position="8"/>
    </location>
    <ligand>
        <name>ATP</name>
        <dbReference type="ChEBI" id="CHEBI:30616"/>
    </ligand>
</feature>
<feature type="binding site" evidence="1">
    <location>
        <position position="8"/>
    </location>
    <ligand>
        <name>CTP</name>
        <dbReference type="ChEBI" id="CHEBI:37563"/>
    </ligand>
</feature>
<feature type="binding site" evidence="1">
    <location>
        <position position="11"/>
    </location>
    <ligand>
        <name>ATP</name>
        <dbReference type="ChEBI" id="CHEBI:30616"/>
    </ligand>
</feature>
<feature type="binding site" evidence="1">
    <location>
        <position position="11"/>
    </location>
    <ligand>
        <name>CTP</name>
        <dbReference type="ChEBI" id="CHEBI:37563"/>
    </ligand>
</feature>
<feature type="binding site" evidence="1">
    <location>
        <position position="21"/>
    </location>
    <ligand>
        <name>Mg(2+)</name>
        <dbReference type="ChEBI" id="CHEBI:18420"/>
    </ligand>
</feature>
<feature type="binding site" evidence="1">
    <location>
        <position position="23"/>
    </location>
    <ligand>
        <name>Mg(2+)</name>
        <dbReference type="ChEBI" id="CHEBI:18420"/>
    </ligand>
</feature>
<feature type="binding site" evidence="1">
    <location>
        <position position="91"/>
    </location>
    <ligand>
        <name>ATP</name>
        <dbReference type="ChEBI" id="CHEBI:30616"/>
    </ligand>
</feature>
<feature type="binding site" evidence="1">
    <location>
        <position position="91"/>
    </location>
    <ligand>
        <name>CTP</name>
        <dbReference type="ChEBI" id="CHEBI:37563"/>
    </ligand>
</feature>
<feature type="binding site" evidence="1">
    <location>
        <position position="137"/>
    </location>
    <ligand>
        <name>ATP</name>
        <dbReference type="ChEBI" id="CHEBI:30616"/>
    </ligand>
</feature>
<feature type="binding site" evidence="1">
    <location>
        <position position="137"/>
    </location>
    <ligand>
        <name>CTP</name>
        <dbReference type="ChEBI" id="CHEBI:37563"/>
    </ligand>
</feature>
<feature type="binding site" evidence="1">
    <location>
        <position position="140"/>
    </location>
    <ligand>
        <name>ATP</name>
        <dbReference type="ChEBI" id="CHEBI:30616"/>
    </ligand>
</feature>
<feature type="binding site" evidence="1">
    <location>
        <position position="140"/>
    </location>
    <ligand>
        <name>CTP</name>
        <dbReference type="ChEBI" id="CHEBI:37563"/>
    </ligand>
</feature>
<reference key="1">
    <citation type="journal article" date="2009" name="Genome Biol.">
        <title>Genomic and genetic analyses of diversity and plant interactions of Pseudomonas fluorescens.</title>
        <authorList>
            <person name="Silby M.W."/>
            <person name="Cerdeno-Tarraga A.M."/>
            <person name="Vernikos G.S."/>
            <person name="Giddens S.R."/>
            <person name="Jackson R.W."/>
            <person name="Preston G.M."/>
            <person name="Zhang X.-X."/>
            <person name="Moon C.D."/>
            <person name="Gehrig S.M."/>
            <person name="Godfrey S.A.C."/>
            <person name="Knight C.G."/>
            <person name="Malone J.G."/>
            <person name="Robinson Z."/>
            <person name="Spiers A.J."/>
            <person name="Harris S."/>
            <person name="Challis G.L."/>
            <person name="Yaxley A.M."/>
            <person name="Harris D."/>
            <person name="Seeger K."/>
            <person name="Murphy L."/>
            <person name="Rutter S."/>
            <person name="Squares R."/>
            <person name="Quail M.A."/>
            <person name="Saunders E."/>
            <person name="Mavromatis K."/>
            <person name="Brettin T.S."/>
            <person name="Bentley S.D."/>
            <person name="Hothersall J."/>
            <person name="Stephens E."/>
            <person name="Thomas C.M."/>
            <person name="Parkhill J."/>
            <person name="Levy S.B."/>
            <person name="Rainey P.B."/>
            <person name="Thomson N.R."/>
        </authorList>
    </citation>
    <scope>NUCLEOTIDE SEQUENCE [LARGE SCALE GENOMIC DNA]</scope>
    <source>
        <strain>SBW25</strain>
    </source>
</reference>
<keyword id="KW-0067">ATP-binding</keyword>
<keyword id="KW-0378">Hydrolase</keyword>
<keyword id="KW-0460">Magnesium</keyword>
<keyword id="KW-0479">Metal-binding</keyword>
<keyword id="KW-0511">Multifunctional enzyme</keyword>
<keyword id="KW-0533">Nickel</keyword>
<keyword id="KW-0547">Nucleotide-binding</keyword>
<keyword id="KW-0548">Nucleotidyltransferase</keyword>
<keyword id="KW-0692">RNA repair</keyword>
<keyword id="KW-0694">RNA-binding</keyword>
<keyword id="KW-0808">Transferase</keyword>
<keyword id="KW-0819">tRNA processing</keyword>
<protein>
    <recommendedName>
        <fullName evidence="1">Multifunctional CCA protein</fullName>
    </recommendedName>
    <domain>
        <recommendedName>
            <fullName evidence="1">CCA-adding enzyme</fullName>
            <ecNumber evidence="1">2.7.7.72</ecNumber>
        </recommendedName>
        <alternativeName>
            <fullName evidence="1">CCA tRNA nucleotidyltransferase</fullName>
        </alternativeName>
        <alternativeName>
            <fullName evidence="1">tRNA CCA-pyrophosphorylase</fullName>
        </alternativeName>
        <alternativeName>
            <fullName evidence="1">tRNA adenylyl-/cytidylyl-transferase</fullName>
        </alternativeName>
        <alternativeName>
            <fullName evidence="1">tRNA nucleotidyltransferase</fullName>
        </alternativeName>
        <alternativeName>
            <fullName evidence="1">tRNA-NT</fullName>
        </alternativeName>
    </domain>
    <domain>
        <recommendedName>
            <fullName evidence="1">2'-nucleotidase</fullName>
            <ecNumber evidence="1">3.1.3.-</ecNumber>
        </recommendedName>
    </domain>
    <domain>
        <recommendedName>
            <fullName evidence="1">2',3'-cyclic phosphodiesterase</fullName>
            <ecNumber evidence="1">3.1.4.-</ecNumber>
        </recommendedName>
    </domain>
    <domain>
        <recommendedName>
            <fullName evidence="1">Phosphatase</fullName>
            <ecNumber evidence="1">3.1.3.-</ecNumber>
        </recommendedName>
    </domain>
</protein>
<dbReference type="EC" id="2.7.7.72" evidence="1"/>
<dbReference type="EC" id="3.1.3.-" evidence="1"/>
<dbReference type="EC" id="3.1.4.-" evidence="1"/>
<dbReference type="EMBL" id="AM181176">
    <property type="protein sequence ID" value="CAY52860.1"/>
    <property type="molecule type" value="Genomic_DNA"/>
</dbReference>
<dbReference type="RefSeq" id="WP_015886181.1">
    <property type="nucleotide sequence ID" value="NC_012660.1"/>
</dbReference>
<dbReference type="SMR" id="C3K334"/>
<dbReference type="STRING" id="294.SRM1_05245"/>
<dbReference type="PATRIC" id="fig|216595.4.peg.5709"/>
<dbReference type="eggNOG" id="COG0617">
    <property type="taxonomic scope" value="Bacteria"/>
</dbReference>
<dbReference type="HOGENOM" id="CLU_015961_1_1_6"/>
<dbReference type="OrthoDB" id="9805698at2"/>
<dbReference type="GO" id="GO:0005524">
    <property type="term" value="F:ATP binding"/>
    <property type="evidence" value="ECO:0007669"/>
    <property type="project" value="UniProtKB-UniRule"/>
</dbReference>
<dbReference type="GO" id="GO:0004810">
    <property type="term" value="F:CCA tRNA nucleotidyltransferase activity"/>
    <property type="evidence" value="ECO:0007669"/>
    <property type="project" value="UniProtKB-UniRule"/>
</dbReference>
<dbReference type="GO" id="GO:0004112">
    <property type="term" value="F:cyclic-nucleotide phosphodiesterase activity"/>
    <property type="evidence" value="ECO:0007669"/>
    <property type="project" value="UniProtKB-UniRule"/>
</dbReference>
<dbReference type="GO" id="GO:0000287">
    <property type="term" value="F:magnesium ion binding"/>
    <property type="evidence" value="ECO:0007669"/>
    <property type="project" value="UniProtKB-UniRule"/>
</dbReference>
<dbReference type="GO" id="GO:0016791">
    <property type="term" value="F:phosphatase activity"/>
    <property type="evidence" value="ECO:0007669"/>
    <property type="project" value="UniProtKB-UniRule"/>
</dbReference>
<dbReference type="GO" id="GO:0000049">
    <property type="term" value="F:tRNA binding"/>
    <property type="evidence" value="ECO:0007669"/>
    <property type="project" value="UniProtKB-UniRule"/>
</dbReference>
<dbReference type="GO" id="GO:0042245">
    <property type="term" value="P:RNA repair"/>
    <property type="evidence" value="ECO:0007669"/>
    <property type="project" value="UniProtKB-KW"/>
</dbReference>
<dbReference type="GO" id="GO:0001680">
    <property type="term" value="P:tRNA 3'-terminal CCA addition"/>
    <property type="evidence" value="ECO:0007669"/>
    <property type="project" value="UniProtKB-UniRule"/>
</dbReference>
<dbReference type="CDD" id="cd00077">
    <property type="entry name" value="HDc"/>
    <property type="match status" value="1"/>
</dbReference>
<dbReference type="CDD" id="cd05398">
    <property type="entry name" value="NT_ClassII-CCAase"/>
    <property type="match status" value="1"/>
</dbReference>
<dbReference type="FunFam" id="1.10.3090.10:FF:000001">
    <property type="entry name" value="Multifunctional CCA protein"/>
    <property type="match status" value="1"/>
</dbReference>
<dbReference type="Gene3D" id="3.30.460.10">
    <property type="entry name" value="Beta Polymerase, domain 2"/>
    <property type="match status" value="1"/>
</dbReference>
<dbReference type="Gene3D" id="1.10.3090.10">
    <property type="entry name" value="cca-adding enzyme, domain 2"/>
    <property type="match status" value="1"/>
</dbReference>
<dbReference type="HAMAP" id="MF_01261">
    <property type="entry name" value="CCA_bact_type1"/>
    <property type="match status" value="1"/>
</dbReference>
<dbReference type="HAMAP" id="MF_01262">
    <property type="entry name" value="CCA_bact_type2"/>
    <property type="match status" value="1"/>
</dbReference>
<dbReference type="InterPro" id="IPR012006">
    <property type="entry name" value="CCA_bact"/>
</dbReference>
<dbReference type="InterPro" id="IPR003607">
    <property type="entry name" value="HD/PDEase_dom"/>
</dbReference>
<dbReference type="InterPro" id="IPR006674">
    <property type="entry name" value="HD_domain"/>
</dbReference>
<dbReference type="InterPro" id="IPR043519">
    <property type="entry name" value="NT_sf"/>
</dbReference>
<dbReference type="InterPro" id="IPR002646">
    <property type="entry name" value="PolA_pol_head_dom"/>
</dbReference>
<dbReference type="InterPro" id="IPR032828">
    <property type="entry name" value="PolyA_RNA-bd"/>
</dbReference>
<dbReference type="InterPro" id="IPR050124">
    <property type="entry name" value="tRNA_CCA-adding_enzyme"/>
</dbReference>
<dbReference type="NCBIfam" id="NF008137">
    <property type="entry name" value="PRK10885.1"/>
    <property type="match status" value="1"/>
</dbReference>
<dbReference type="PANTHER" id="PTHR47545">
    <property type="entry name" value="MULTIFUNCTIONAL CCA PROTEIN"/>
    <property type="match status" value="1"/>
</dbReference>
<dbReference type="PANTHER" id="PTHR47545:SF1">
    <property type="entry name" value="MULTIFUNCTIONAL CCA PROTEIN"/>
    <property type="match status" value="1"/>
</dbReference>
<dbReference type="Pfam" id="PF01966">
    <property type="entry name" value="HD"/>
    <property type="match status" value="1"/>
</dbReference>
<dbReference type="Pfam" id="PF01743">
    <property type="entry name" value="PolyA_pol"/>
    <property type="match status" value="1"/>
</dbReference>
<dbReference type="Pfam" id="PF12627">
    <property type="entry name" value="PolyA_pol_RNAbd"/>
    <property type="match status" value="1"/>
</dbReference>
<dbReference type="PIRSF" id="PIRSF000813">
    <property type="entry name" value="CCA_bact"/>
    <property type="match status" value="1"/>
</dbReference>
<dbReference type="SMART" id="SM00471">
    <property type="entry name" value="HDc"/>
    <property type="match status" value="1"/>
</dbReference>
<dbReference type="SUPFAM" id="SSF81301">
    <property type="entry name" value="Nucleotidyltransferase"/>
    <property type="match status" value="1"/>
</dbReference>
<dbReference type="SUPFAM" id="SSF81891">
    <property type="entry name" value="Poly A polymerase C-terminal region-like"/>
    <property type="match status" value="1"/>
</dbReference>
<dbReference type="PROSITE" id="PS51831">
    <property type="entry name" value="HD"/>
    <property type="match status" value="1"/>
</dbReference>
<comment type="function">
    <text evidence="1">Catalyzes the addition and repair of the essential 3'-terminal CCA sequence in tRNAs without using a nucleic acid template. Adds these three nucleotides in the order of C, C, and A to the tRNA nucleotide-73, using CTP and ATP as substrates and producing inorganic pyrophosphate. tRNA 3'-terminal CCA addition is required both for tRNA processing and repair. Also involved in tRNA surveillance by mediating tandem CCA addition to generate a CCACCA at the 3' terminus of unstable tRNAs. While stable tRNAs receive only 3'-terminal CCA, unstable tRNAs are marked with CCACCA and rapidly degraded.</text>
</comment>
<comment type="catalytic activity">
    <reaction evidence="1">
        <text>a tRNA precursor + 2 CTP + ATP = a tRNA with a 3' CCA end + 3 diphosphate</text>
        <dbReference type="Rhea" id="RHEA:14433"/>
        <dbReference type="Rhea" id="RHEA-COMP:10465"/>
        <dbReference type="Rhea" id="RHEA-COMP:10468"/>
        <dbReference type="ChEBI" id="CHEBI:30616"/>
        <dbReference type="ChEBI" id="CHEBI:33019"/>
        <dbReference type="ChEBI" id="CHEBI:37563"/>
        <dbReference type="ChEBI" id="CHEBI:74896"/>
        <dbReference type="ChEBI" id="CHEBI:83071"/>
        <dbReference type="EC" id="2.7.7.72"/>
    </reaction>
</comment>
<comment type="catalytic activity">
    <reaction evidence="1">
        <text>a tRNA with a 3' CCA end + 2 CTP + ATP = a tRNA with a 3' CCACCA end + 3 diphosphate</text>
        <dbReference type="Rhea" id="RHEA:76235"/>
        <dbReference type="Rhea" id="RHEA-COMP:10468"/>
        <dbReference type="Rhea" id="RHEA-COMP:18655"/>
        <dbReference type="ChEBI" id="CHEBI:30616"/>
        <dbReference type="ChEBI" id="CHEBI:33019"/>
        <dbReference type="ChEBI" id="CHEBI:37563"/>
        <dbReference type="ChEBI" id="CHEBI:83071"/>
        <dbReference type="ChEBI" id="CHEBI:195187"/>
    </reaction>
    <physiologicalReaction direction="left-to-right" evidence="1">
        <dbReference type="Rhea" id="RHEA:76236"/>
    </physiologicalReaction>
</comment>
<comment type="cofactor">
    <cofactor evidence="1">
        <name>Mg(2+)</name>
        <dbReference type="ChEBI" id="CHEBI:18420"/>
    </cofactor>
    <text evidence="1">Magnesium is required for nucleotidyltransferase activity.</text>
</comment>
<comment type="cofactor">
    <cofactor evidence="1">
        <name>Ni(2+)</name>
        <dbReference type="ChEBI" id="CHEBI:49786"/>
    </cofactor>
    <text evidence="1">Nickel for phosphatase activity.</text>
</comment>
<comment type="subunit">
    <text evidence="1">Monomer. Can also form homodimers and oligomers.</text>
</comment>
<comment type="domain">
    <text evidence="1">Comprises two domains: an N-terminal domain containing the nucleotidyltransferase activity and a C-terminal HD domain associated with both phosphodiesterase and phosphatase activities.</text>
</comment>
<comment type="miscellaneous">
    <text evidence="1">A single active site specifically recognizes both ATP and CTP and is responsible for their addition.</text>
</comment>
<comment type="similarity">
    <text evidence="1">Belongs to the tRNA nucleotidyltransferase/poly(A) polymerase family. Bacterial CCA-adding enzyme type 1 subfamily.</text>
</comment>